<feature type="chain" id="PRO_0000205686" description="Tropomyosin-2">
    <location>
        <begin position="1"/>
        <end position="284"/>
    </location>
</feature>
<feature type="region of interest" description="Disordered" evidence="2">
    <location>
        <begin position="82"/>
        <end position="110"/>
    </location>
</feature>
<feature type="coiled-coil region" evidence="1">
    <location>
        <begin position="1"/>
        <end position="284"/>
    </location>
</feature>
<feature type="splice variant" id="VSP_006616" description="In isoform Embryonic." evidence="4 5">
    <original>RLFNEKEKYKAICDDLDQTFAELTGY</original>
    <variation>ELGINKDRYKSLADEMDSTFAELAGY</variation>
    <location>
        <begin position="259"/>
        <end position="284"/>
    </location>
</feature>
<feature type="sequence conflict" description="In Ref. 1; AAA28970/AAA28971." evidence="6" ref="1">
    <original>M</original>
    <variation>V</variation>
    <location>
        <position position="11"/>
    </location>
</feature>
<feature type="sequence conflict" description="In Ref. 1; AAA28970/AAA28971." evidence="6" ref="1">
    <original>Q</original>
    <variation>L</variation>
    <location>
        <position position="88"/>
    </location>
</feature>
<feature type="sequence conflict" description="In Ref. 1; AAA28970/AAA28971." evidence="6" ref="1">
    <original>I</original>
    <variation>T</variation>
    <location>
        <position position="95"/>
    </location>
</feature>
<feature type="sequence conflict" description="In Ref. 1; AAA28970/AAA28971." evidence="6" ref="1">
    <original>R</original>
    <variation>D</variation>
    <location>
        <position position="255"/>
    </location>
</feature>
<evidence type="ECO:0000250" key="1"/>
<evidence type="ECO:0000256" key="2">
    <source>
        <dbReference type="SAM" id="MobiDB-lite"/>
    </source>
</evidence>
<evidence type="ECO:0000269" key="3">
    <source>
    </source>
</evidence>
<evidence type="ECO:0000303" key="4">
    <source>
    </source>
</evidence>
<evidence type="ECO:0000303" key="5">
    <source ref="6"/>
</evidence>
<evidence type="ECO:0000305" key="6"/>
<gene>
    <name type="primary">Tm2</name>
    <name type="synonym">TmI</name>
    <name type="ORF">CG4843</name>
</gene>
<organism>
    <name type="scientific">Drosophila melanogaster</name>
    <name type="common">Fruit fly</name>
    <dbReference type="NCBI Taxonomy" id="7227"/>
    <lineage>
        <taxon>Eukaryota</taxon>
        <taxon>Metazoa</taxon>
        <taxon>Ecdysozoa</taxon>
        <taxon>Arthropoda</taxon>
        <taxon>Hexapoda</taxon>
        <taxon>Insecta</taxon>
        <taxon>Pterygota</taxon>
        <taxon>Neoptera</taxon>
        <taxon>Endopterygota</taxon>
        <taxon>Diptera</taxon>
        <taxon>Brachycera</taxon>
        <taxon>Muscomorpha</taxon>
        <taxon>Ephydroidea</taxon>
        <taxon>Drosophilidae</taxon>
        <taxon>Drosophila</taxon>
        <taxon>Sophophora</taxon>
    </lineage>
</organism>
<comment type="function">
    <text evidence="3">Tropomyosin, in association with the troponin complex, plays a central role in the calcium dependent regulation of muscle contraction. May also regulate motor systems required to maintain nuclear integrity and apico-basal polarity during embryogenesis.</text>
</comment>
<comment type="subunit">
    <text evidence="1">Homodimer.</text>
</comment>
<comment type="alternative products">
    <event type="alternative splicing"/>
    <isoform>
        <id>P09491-1</id>
        <name>Thoracic</name>
        <name>127</name>
        <name>C</name>
        <name>t</name>
        <sequence type="displayed"/>
    </isoform>
    <isoform>
        <id>P09491-2</id>
        <name>Embryonic</name>
        <name>129</name>
        <name>A</name>
        <name>B</name>
        <name>e</name>
        <sequence type="described" ref="VSP_006616"/>
    </isoform>
</comment>
<comment type="domain">
    <text>The molecule is in a coiled coil structure that is formed by 2 polypeptide chains. The sequence exhibits a prominent seven-residues periodicity.</text>
</comment>
<comment type="disruption phenotype">
    <text evidence="3">Pre-cellular embryos exhibit abnormal nuclear divisions with frequent loss of chromosome fragments. During cellularization, apico-basal polarity is also disrupted.</text>
</comment>
<comment type="similarity">
    <text evidence="6">Belongs to the tropomyosin family.</text>
</comment>
<comment type="sequence caution" evidence="6">
    <conflict type="frameshift">
        <sequence resource="EMBL-CDS" id="ABK30920"/>
    </conflict>
</comment>
<comment type="sequence caution" evidence="6">
    <conflict type="erroneous gene model prediction">
        <sequence resource="EMBL-CDS" id="CAA26142"/>
    </conflict>
</comment>
<sequence length="284" mass="32981">MDAIKKKMQAMKLEKDNAIDKADTCENQAKDANSRADKLNEEVRDLEKKFVQVEIDLVTAKEQLEKANTELEEKEKLLTATESEVATQNRKVQQIEEDLEKSEERSTTAQQKLLEATQSADENNRMCKVLENRSQQDEERMDQLTNQLKEARMLAEDADTKSDEVSRKLAFVEDELEVAEDRVRSGESKIMELEEELKVVGNSLKSLEVSEEKANQRVEEFKREMKTLSIKLKEAEQRAEHAEKQVKRLQKEVDRLEDRLFNEKEKYKAICDDLDQTFAELTGY</sequence>
<proteinExistence type="evidence at transcript level"/>
<accession>P09491</accession>
<accession>A0AVW5</accession>
<accession>A4V2Y6</accession>
<accession>P09490</accession>
<accession>Q24408</accession>
<accession>Q24427</accession>
<accession>Q24428</accession>
<accession>Q8SZ65</accession>
<accession>Q9VF95</accession>
<protein>
    <recommendedName>
        <fullName>Tropomyosin-2</fullName>
    </recommendedName>
    <alternativeName>
        <fullName>Tropomyosin I</fullName>
    </alternativeName>
</protein>
<dbReference type="EMBL" id="K02622">
    <property type="protein sequence ID" value="AAA28970.1"/>
    <property type="molecule type" value="Genomic_DNA"/>
</dbReference>
<dbReference type="EMBL" id="K02623">
    <property type="protein sequence ID" value="AAA28971.1"/>
    <property type="molecule type" value="Genomic_DNA"/>
</dbReference>
<dbReference type="EMBL" id="K02622">
    <property type="protein sequence ID" value="AAA28971.1"/>
    <property type="status" value="JOINED"/>
    <property type="molecule type" value="Genomic_DNA"/>
</dbReference>
<dbReference type="EMBL" id="K03277">
    <property type="protein sequence ID" value="AAA28973.1"/>
    <property type="molecule type" value="Genomic_DNA"/>
</dbReference>
<dbReference type="EMBL" id="K03277">
    <property type="protein sequence ID" value="AAA28974.1"/>
    <property type="molecule type" value="Genomic_DNA"/>
</dbReference>
<dbReference type="EMBL" id="AE014297">
    <property type="protein sequence ID" value="AAN13652.1"/>
    <property type="molecule type" value="Genomic_DNA"/>
</dbReference>
<dbReference type="EMBL" id="AE014297">
    <property type="protein sequence ID" value="AAN13653.1"/>
    <property type="molecule type" value="Genomic_DNA"/>
</dbReference>
<dbReference type="EMBL" id="AE014297">
    <property type="protein sequence ID" value="AAN13654.2"/>
    <property type="molecule type" value="Genomic_DNA"/>
</dbReference>
<dbReference type="EMBL" id="AY071087">
    <property type="protein sequence ID" value="AAL48709.1"/>
    <property type="molecule type" value="mRNA"/>
</dbReference>
<dbReference type="EMBL" id="BT029283">
    <property type="protein sequence ID" value="ABK30920.1"/>
    <property type="status" value="ALT_FRAME"/>
    <property type="molecule type" value="mRNA"/>
</dbReference>
<dbReference type="EMBL" id="BT044580">
    <property type="protein sequence ID" value="ACI16542.1"/>
    <property type="molecule type" value="mRNA"/>
</dbReference>
<dbReference type="EMBL" id="X02220">
    <property type="protein sequence ID" value="CAA26142.1"/>
    <property type="status" value="ALT_SEQ"/>
    <property type="molecule type" value="Genomic_DNA"/>
</dbReference>
<dbReference type="PIR" id="A25624">
    <property type="entry name" value="A25624"/>
</dbReference>
<dbReference type="PIR" id="B25624">
    <property type="entry name" value="B25624"/>
</dbReference>
<dbReference type="RefSeq" id="NP_001262592.1">
    <molecule id="P09491-2"/>
    <property type="nucleotide sequence ID" value="NM_001275663.1"/>
</dbReference>
<dbReference type="RefSeq" id="NP_001262593.1">
    <molecule id="P09491-2"/>
    <property type="nucleotide sequence ID" value="NM_001275664.1"/>
</dbReference>
<dbReference type="RefSeq" id="NP_001287337.1">
    <molecule id="P09491-2"/>
    <property type="nucleotide sequence ID" value="NM_001300408.1"/>
</dbReference>
<dbReference type="RefSeq" id="NP_524361.4">
    <molecule id="P09491-2"/>
    <property type="nucleotide sequence ID" value="NM_079637.5"/>
</dbReference>
<dbReference type="RefSeq" id="NP_732012.1">
    <molecule id="P09491-2"/>
    <property type="nucleotide sequence ID" value="NM_169644.2"/>
</dbReference>
<dbReference type="RefSeq" id="NP_732013.2">
    <molecule id="P09491-1"/>
    <property type="nucleotide sequence ID" value="NM_169645.4"/>
</dbReference>
<dbReference type="SMR" id="P09491"/>
<dbReference type="BioGRID" id="66917">
    <property type="interactions" value="77"/>
</dbReference>
<dbReference type="DIP" id="DIP-21556N"/>
<dbReference type="FunCoup" id="P09491">
    <property type="interactions" value="12"/>
</dbReference>
<dbReference type="IntAct" id="P09491">
    <property type="interactions" value="86"/>
</dbReference>
<dbReference type="STRING" id="7227.FBpp0089270"/>
<dbReference type="Allergome" id="1517">
    <property type="allergen name" value="Dro m 7"/>
</dbReference>
<dbReference type="Allergome" id="4080">
    <property type="allergen name" value="Dro m 7.0102"/>
</dbReference>
<dbReference type="Allergome" id="4174">
    <property type="allergen name" value="Dro m 7.0104"/>
</dbReference>
<dbReference type="Allergome" id="4175">
    <property type="allergen name" value="Dro m 7.0105"/>
</dbReference>
<dbReference type="PaxDb" id="7227-FBpp0082535"/>
<dbReference type="DNASU" id="41853"/>
<dbReference type="EnsemblMetazoa" id="FBtr0083078">
    <molecule id="P09491-2"/>
    <property type="protein sequence ID" value="FBpp0082535"/>
    <property type="gene ID" value="FBgn0004117"/>
</dbReference>
<dbReference type="EnsemblMetazoa" id="FBtr0083079">
    <molecule id="P09491-2"/>
    <property type="protein sequence ID" value="FBpp0082536"/>
    <property type="gene ID" value="FBgn0004117"/>
</dbReference>
<dbReference type="EnsemblMetazoa" id="FBtr0083080">
    <molecule id="P09491-1"/>
    <property type="protein sequence ID" value="FBpp0089270"/>
    <property type="gene ID" value="FBgn0004117"/>
</dbReference>
<dbReference type="EnsemblMetazoa" id="FBtr0333920">
    <molecule id="P09491-2"/>
    <property type="protein sequence ID" value="FBpp0306048"/>
    <property type="gene ID" value="FBgn0004117"/>
</dbReference>
<dbReference type="EnsemblMetazoa" id="FBtr0339530">
    <molecule id="P09491-2"/>
    <property type="protein sequence ID" value="FBpp0308613"/>
    <property type="gene ID" value="FBgn0004117"/>
</dbReference>
<dbReference type="EnsemblMetazoa" id="FBtr0345212">
    <molecule id="P09491-2"/>
    <property type="protein sequence ID" value="FBpp0311407"/>
    <property type="gene ID" value="FBgn0004117"/>
</dbReference>
<dbReference type="GeneID" id="41853"/>
<dbReference type="KEGG" id="dme:Dmel_CG4843"/>
<dbReference type="UCSC" id="CG4843-RB">
    <property type="organism name" value="d. melanogaster"/>
</dbReference>
<dbReference type="AGR" id="FB:FBgn0004117"/>
<dbReference type="CTD" id="41853"/>
<dbReference type="FlyBase" id="FBgn0004117">
    <property type="gene designation" value="Tm2"/>
</dbReference>
<dbReference type="VEuPathDB" id="VectorBase:FBgn0004117"/>
<dbReference type="eggNOG" id="KOG1003">
    <property type="taxonomic scope" value="Eukaryota"/>
</dbReference>
<dbReference type="GeneTree" id="ENSGT01030000234542"/>
<dbReference type="HOGENOM" id="CLU_055027_0_2_1"/>
<dbReference type="InParanoid" id="P09491"/>
<dbReference type="OMA" id="HHARESE"/>
<dbReference type="OrthoDB" id="128924at2759"/>
<dbReference type="PhylomeDB" id="P09491"/>
<dbReference type="Reactome" id="R-DME-445355">
    <property type="pathway name" value="Smooth Muscle Contraction"/>
</dbReference>
<dbReference type="Reactome" id="R-DME-9013424">
    <property type="pathway name" value="RHOV GTPase cycle"/>
</dbReference>
<dbReference type="SignaLink" id="P09491"/>
<dbReference type="BioGRID-ORCS" id="41853">
    <property type="hits" value="0 hits in 3 CRISPR screens"/>
</dbReference>
<dbReference type="GenomeRNAi" id="41853"/>
<dbReference type="PRO" id="PR:P09491"/>
<dbReference type="Proteomes" id="UP000000803">
    <property type="component" value="Chromosome 3R"/>
</dbReference>
<dbReference type="Bgee" id="FBgn0004117">
    <property type="expression patterns" value="Expressed in crop (Drosophila) and 116 other cell types or tissues"/>
</dbReference>
<dbReference type="ExpressionAtlas" id="P09491">
    <property type="expression patterns" value="baseline and differential"/>
</dbReference>
<dbReference type="GO" id="GO:0005884">
    <property type="term" value="C:actin filament"/>
    <property type="evidence" value="ECO:0000318"/>
    <property type="project" value="GO_Central"/>
</dbReference>
<dbReference type="GO" id="GO:0051015">
    <property type="term" value="F:actin filament binding"/>
    <property type="evidence" value="ECO:0000318"/>
    <property type="project" value="GO_Central"/>
</dbReference>
<dbReference type="GO" id="GO:0007015">
    <property type="term" value="P:actin filament organization"/>
    <property type="evidence" value="ECO:0000318"/>
    <property type="project" value="GO_Central"/>
</dbReference>
<dbReference type="GO" id="GO:0007507">
    <property type="term" value="P:heart development"/>
    <property type="evidence" value="ECO:0000315"/>
    <property type="project" value="FlyBase"/>
</dbReference>
<dbReference type="GO" id="GO:0006936">
    <property type="term" value="P:muscle contraction"/>
    <property type="evidence" value="ECO:0000318"/>
    <property type="project" value="GO_Central"/>
</dbReference>
<dbReference type="GO" id="GO:0060298">
    <property type="term" value="P:positive regulation of sarcomere organization"/>
    <property type="evidence" value="ECO:0000316"/>
    <property type="project" value="FlyBase"/>
</dbReference>
<dbReference type="FunFam" id="1.20.5.170:FF:000005">
    <property type="entry name" value="Tropomyosin alpha-1 chain"/>
    <property type="match status" value="1"/>
</dbReference>
<dbReference type="FunFam" id="1.20.5.170:FF:000001">
    <property type="entry name" value="Tropomyosin alpha-1 chain isoform 1"/>
    <property type="match status" value="1"/>
</dbReference>
<dbReference type="FunFam" id="1.20.5.340:FF:000001">
    <property type="entry name" value="Tropomyosin alpha-1 chain isoform 2"/>
    <property type="match status" value="1"/>
</dbReference>
<dbReference type="Gene3D" id="1.20.5.170">
    <property type="match status" value="2"/>
</dbReference>
<dbReference type="Gene3D" id="1.20.5.340">
    <property type="match status" value="1"/>
</dbReference>
<dbReference type="InterPro" id="IPR000533">
    <property type="entry name" value="Tropomyosin"/>
</dbReference>
<dbReference type="PANTHER" id="PTHR19269">
    <property type="entry name" value="TROPOMYOSIN"/>
    <property type="match status" value="1"/>
</dbReference>
<dbReference type="Pfam" id="PF00261">
    <property type="entry name" value="Tropomyosin"/>
    <property type="match status" value="1"/>
</dbReference>
<dbReference type="PRINTS" id="PR00194">
    <property type="entry name" value="TROPOMYOSIN"/>
</dbReference>
<dbReference type="SUPFAM" id="SSF57997">
    <property type="entry name" value="Tropomyosin"/>
    <property type="match status" value="1"/>
</dbReference>
<dbReference type="PROSITE" id="PS00326">
    <property type="entry name" value="TROPOMYOSIN"/>
    <property type="match status" value="1"/>
</dbReference>
<name>TPM2_DROME</name>
<keyword id="KW-0025">Alternative splicing</keyword>
<keyword id="KW-0175">Coiled coil</keyword>
<keyword id="KW-0514">Muscle protein</keyword>
<keyword id="KW-1185">Reference proteome</keyword>
<keyword id="KW-0677">Repeat</keyword>
<reference key="1">
    <citation type="journal article" date="1984" name="Cell">
        <title>Organization of contractile protein genes within the 88F subdivision of the D. melanogaster third chromosome.</title>
        <authorList>
            <person name="Karlik C.C."/>
            <person name="Mahaffey J.W."/>
            <person name="Coutu M.D."/>
            <person name="Fyrberg E.A."/>
        </authorList>
    </citation>
    <scope>NUCLEOTIDE SEQUENCE [GENOMIC DNA]</scope>
    <scope>ALTERNATIVE SPLICING</scope>
    <source>
        <tissue>Embryo</tissue>
        <tissue>Larva</tissue>
        <tissue>Pupae</tissue>
    </source>
</reference>
<reference key="2">
    <citation type="journal article" date="1986" name="J. Biol. Chem.">
        <title>Structure and DNA sequence of the tropomyosin I gene from Drosophila melanogaster.</title>
        <authorList>
            <person name="Basi G.S."/>
            <person name="Storti R.V."/>
        </authorList>
    </citation>
    <scope>NUCLEOTIDE SEQUENCE [GENOMIC DNA]</scope>
    <scope>ALTERNATIVE SPLICING</scope>
</reference>
<reference key="3">
    <citation type="journal article" date="2000" name="Science">
        <title>The genome sequence of Drosophila melanogaster.</title>
        <authorList>
            <person name="Adams M.D."/>
            <person name="Celniker S.E."/>
            <person name="Holt R.A."/>
            <person name="Evans C.A."/>
            <person name="Gocayne J.D."/>
            <person name="Amanatides P.G."/>
            <person name="Scherer S.E."/>
            <person name="Li P.W."/>
            <person name="Hoskins R.A."/>
            <person name="Galle R.F."/>
            <person name="George R.A."/>
            <person name="Lewis S.E."/>
            <person name="Richards S."/>
            <person name="Ashburner M."/>
            <person name="Henderson S.N."/>
            <person name="Sutton G.G."/>
            <person name="Wortman J.R."/>
            <person name="Yandell M.D."/>
            <person name="Zhang Q."/>
            <person name="Chen L.X."/>
            <person name="Brandon R.C."/>
            <person name="Rogers Y.-H.C."/>
            <person name="Blazej R.G."/>
            <person name="Champe M."/>
            <person name="Pfeiffer B.D."/>
            <person name="Wan K.H."/>
            <person name="Doyle C."/>
            <person name="Baxter E.G."/>
            <person name="Helt G."/>
            <person name="Nelson C.R."/>
            <person name="Miklos G.L.G."/>
            <person name="Abril J.F."/>
            <person name="Agbayani A."/>
            <person name="An H.-J."/>
            <person name="Andrews-Pfannkoch C."/>
            <person name="Baldwin D."/>
            <person name="Ballew R.M."/>
            <person name="Basu A."/>
            <person name="Baxendale J."/>
            <person name="Bayraktaroglu L."/>
            <person name="Beasley E.M."/>
            <person name="Beeson K.Y."/>
            <person name="Benos P.V."/>
            <person name="Berman B.P."/>
            <person name="Bhandari D."/>
            <person name="Bolshakov S."/>
            <person name="Borkova D."/>
            <person name="Botchan M.R."/>
            <person name="Bouck J."/>
            <person name="Brokstein P."/>
            <person name="Brottier P."/>
            <person name="Burtis K.C."/>
            <person name="Busam D.A."/>
            <person name="Butler H."/>
            <person name="Cadieu E."/>
            <person name="Center A."/>
            <person name="Chandra I."/>
            <person name="Cherry J.M."/>
            <person name="Cawley S."/>
            <person name="Dahlke C."/>
            <person name="Davenport L.B."/>
            <person name="Davies P."/>
            <person name="de Pablos B."/>
            <person name="Delcher A."/>
            <person name="Deng Z."/>
            <person name="Mays A.D."/>
            <person name="Dew I."/>
            <person name="Dietz S.M."/>
            <person name="Dodson K."/>
            <person name="Doup L.E."/>
            <person name="Downes M."/>
            <person name="Dugan-Rocha S."/>
            <person name="Dunkov B.C."/>
            <person name="Dunn P."/>
            <person name="Durbin K.J."/>
            <person name="Evangelista C.C."/>
            <person name="Ferraz C."/>
            <person name="Ferriera S."/>
            <person name="Fleischmann W."/>
            <person name="Fosler C."/>
            <person name="Gabrielian A.E."/>
            <person name="Garg N.S."/>
            <person name="Gelbart W.M."/>
            <person name="Glasser K."/>
            <person name="Glodek A."/>
            <person name="Gong F."/>
            <person name="Gorrell J.H."/>
            <person name="Gu Z."/>
            <person name="Guan P."/>
            <person name="Harris M."/>
            <person name="Harris N.L."/>
            <person name="Harvey D.A."/>
            <person name="Heiman T.J."/>
            <person name="Hernandez J.R."/>
            <person name="Houck J."/>
            <person name="Hostin D."/>
            <person name="Houston K.A."/>
            <person name="Howland T.J."/>
            <person name="Wei M.-H."/>
            <person name="Ibegwam C."/>
            <person name="Jalali M."/>
            <person name="Kalush F."/>
            <person name="Karpen G.H."/>
            <person name="Ke Z."/>
            <person name="Kennison J.A."/>
            <person name="Ketchum K.A."/>
            <person name="Kimmel B.E."/>
            <person name="Kodira C.D."/>
            <person name="Kraft C.L."/>
            <person name="Kravitz S."/>
            <person name="Kulp D."/>
            <person name="Lai Z."/>
            <person name="Lasko P."/>
            <person name="Lei Y."/>
            <person name="Levitsky A.A."/>
            <person name="Li J.H."/>
            <person name="Li Z."/>
            <person name="Liang Y."/>
            <person name="Lin X."/>
            <person name="Liu X."/>
            <person name="Mattei B."/>
            <person name="McIntosh T.C."/>
            <person name="McLeod M.P."/>
            <person name="McPherson D."/>
            <person name="Merkulov G."/>
            <person name="Milshina N.V."/>
            <person name="Mobarry C."/>
            <person name="Morris J."/>
            <person name="Moshrefi A."/>
            <person name="Mount S.M."/>
            <person name="Moy M."/>
            <person name="Murphy B."/>
            <person name="Murphy L."/>
            <person name="Muzny D.M."/>
            <person name="Nelson D.L."/>
            <person name="Nelson D.R."/>
            <person name="Nelson K.A."/>
            <person name="Nixon K."/>
            <person name="Nusskern D.R."/>
            <person name="Pacleb J.M."/>
            <person name="Palazzolo M."/>
            <person name="Pittman G.S."/>
            <person name="Pan S."/>
            <person name="Pollard J."/>
            <person name="Puri V."/>
            <person name="Reese M.G."/>
            <person name="Reinert K."/>
            <person name="Remington K."/>
            <person name="Saunders R.D.C."/>
            <person name="Scheeler F."/>
            <person name="Shen H."/>
            <person name="Shue B.C."/>
            <person name="Siden-Kiamos I."/>
            <person name="Simpson M."/>
            <person name="Skupski M.P."/>
            <person name="Smith T.J."/>
            <person name="Spier E."/>
            <person name="Spradling A.C."/>
            <person name="Stapleton M."/>
            <person name="Strong R."/>
            <person name="Sun E."/>
            <person name="Svirskas R."/>
            <person name="Tector C."/>
            <person name="Turner R."/>
            <person name="Venter E."/>
            <person name="Wang A.H."/>
            <person name="Wang X."/>
            <person name="Wang Z.-Y."/>
            <person name="Wassarman D.A."/>
            <person name="Weinstock G.M."/>
            <person name="Weissenbach J."/>
            <person name="Williams S.M."/>
            <person name="Woodage T."/>
            <person name="Worley K.C."/>
            <person name="Wu D."/>
            <person name="Yang S."/>
            <person name="Yao Q.A."/>
            <person name="Ye J."/>
            <person name="Yeh R.-F."/>
            <person name="Zaveri J.S."/>
            <person name="Zhan M."/>
            <person name="Zhang G."/>
            <person name="Zhao Q."/>
            <person name="Zheng L."/>
            <person name="Zheng X.H."/>
            <person name="Zhong F.N."/>
            <person name="Zhong W."/>
            <person name="Zhou X."/>
            <person name="Zhu S.C."/>
            <person name="Zhu X."/>
            <person name="Smith H.O."/>
            <person name="Gibbs R.A."/>
            <person name="Myers E.W."/>
            <person name="Rubin G.M."/>
            <person name="Venter J.C."/>
        </authorList>
    </citation>
    <scope>NUCLEOTIDE SEQUENCE [LARGE SCALE GENOMIC DNA]</scope>
    <source>
        <strain>Berkeley</strain>
    </source>
</reference>
<reference key="4">
    <citation type="journal article" date="2002" name="Genome Biol.">
        <title>Annotation of the Drosophila melanogaster euchromatic genome: a systematic review.</title>
        <authorList>
            <person name="Misra S."/>
            <person name="Crosby M.A."/>
            <person name="Mungall C.J."/>
            <person name="Matthews B.B."/>
            <person name="Campbell K.S."/>
            <person name="Hradecky P."/>
            <person name="Huang Y."/>
            <person name="Kaminker J.S."/>
            <person name="Millburn G.H."/>
            <person name="Prochnik S.E."/>
            <person name="Smith C.D."/>
            <person name="Tupy J.L."/>
            <person name="Whitfield E.J."/>
            <person name="Bayraktaroglu L."/>
            <person name="Berman B.P."/>
            <person name="Bettencourt B.R."/>
            <person name="Celniker S.E."/>
            <person name="de Grey A.D.N.J."/>
            <person name="Drysdale R.A."/>
            <person name="Harris N.L."/>
            <person name="Richter J."/>
            <person name="Russo S."/>
            <person name="Schroeder A.J."/>
            <person name="Shu S.Q."/>
            <person name="Stapleton M."/>
            <person name="Yamada C."/>
            <person name="Ashburner M."/>
            <person name="Gelbart W.M."/>
            <person name="Rubin G.M."/>
            <person name="Lewis S.E."/>
        </authorList>
    </citation>
    <scope>GENOME REANNOTATION</scope>
    <scope>ALTERNATIVE SPLICING</scope>
    <source>
        <strain>Berkeley</strain>
    </source>
</reference>
<reference key="5">
    <citation type="journal article" date="2002" name="Genome Biol.">
        <title>A Drosophila full-length cDNA resource.</title>
        <authorList>
            <person name="Stapleton M."/>
            <person name="Carlson J.W."/>
            <person name="Brokstein P."/>
            <person name="Yu C."/>
            <person name="Champe M."/>
            <person name="George R.A."/>
            <person name="Guarin H."/>
            <person name="Kronmiller B."/>
            <person name="Pacleb J.M."/>
            <person name="Park S."/>
            <person name="Wan K.H."/>
            <person name="Rubin G.M."/>
            <person name="Celniker S.E."/>
        </authorList>
    </citation>
    <scope>NUCLEOTIDE SEQUENCE [LARGE SCALE MRNA] (ISOFORM EMBRYONIC)</scope>
    <source>
        <strain>Berkeley</strain>
        <tissue>Embryo</tissue>
    </source>
</reference>
<reference key="6">
    <citation type="submission" date="2008-09" db="EMBL/GenBank/DDBJ databases">
        <authorList>
            <person name="Stapleton M."/>
            <person name="Carlson J.W."/>
            <person name="Booth B."/>
            <person name="Frise E."/>
            <person name="Park S."/>
            <person name="Kapadia B."/>
            <person name="Wan K.H."/>
            <person name="Yu C."/>
            <person name="Celniker S.E."/>
        </authorList>
    </citation>
    <scope>NUCLEOTIDE SEQUENCE [LARGE SCALE MRNA] (ISOFORMS EMBRYONIC AND THORACIC)</scope>
    <source>
        <strain>Berkeley</strain>
    </source>
</reference>
<reference key="7">
    <citation type="journal article" date="1985" name="Nucleic Acids Res.">
        <title>Multiple polyadenylation sites in a Drosophila tropomyosin gene are used to generate functional mRNAs.</title>
        <authorList>
            <person name="Boardman M."/>
            <person name="Basi G.S."/>
            <person name="Storti R.V."/>
        </authorList>
    </citation>
    <scope>NUCLEOTIDE SEQUENCE [GENOMIC DNA] OF 258-284</scope>
</reference>
<reference key="8">
    <citation type="journal article" date="2009" name="J. Cell Sci.">
        <title>Troponin I and Tropomyosin regulate chromosomal stability and cell polarity.</title>
        <authorList>
            <person name="Sahota V.K."/>
            <person name="Grau B.F."/>
            <person name="Mansilla A."/>
            <person name="Ferrus A."/>
        </authorList>
    </citation>
    <scope>FUNCTION</scope>
    <scope>DISRUPTION PHENOTYPE</scope>
</reference>